<accession>P80625</accession>
<protein>
    <recommendedName>
        <fullName>Unknown protein from spot 406 of 2D-PAGE of etiolated coleoptile</fullName>
    </recommendedName>
</protein>
<feature type="chain" id="PRO_0000055515" description="Unknown protein from spot 406 of 2D-PAGE of etiolated coleoptile">
    <location>
        <begin position="1" status="less than"/>
        <end position="15" status="greater than"/>
    </location>
</feature>
<feature type="non-terminal residue">
    <location>
        <position position="1"/>
    </location>
</feature>
<feature type="non-terminal residue">
    <location>
        <position position="15"/>
    </location>
</feature>
<comment type="miscellaneous">
    <text>On the 2D-gel the determined pI of this unknown protein is: 5.6, its MW is: 18.4 kDa.</text>
</comment>
<proteinExistence type="evidence at protein level"/>
<sequence>NGRRYTTYGCSPPVT</sequence>
<dbReference type="MaizeGDB" id="123951"/>
<dbReference type="eggNOG" id="ENOG502QQ0R">
    <property type="taxonomic scope" value="Eukaryota"/>
</dbReference>
<dbReference type="InParanoid" id="P80625"/>
<dbReference type="Proteomes" id="UP000007305">
    <property type="component" value="Unplaced"/>
</dbReference>
<organism>
    <name type="scientific">Zea mays</name>
    <name type="common">Maize</name>
    <dbReference type="NCBI Taxonomy" id="4577"/>
    <lineage>
        <taxon>Eukaryota</taxon>
        <taxon>Viridiplantae</taxon>
        <taxon>Streptophyta</taxon>
        <taxon>Embryophyta</taxon>
        <taxon>Tracheophyta</taxon>
        <taxon>Spermatophyta</taxon>
        <taxon>Magnoliopsida</taxon>
        <taxon>Liliopsida</taxon>
        <taxon>Poales</taxon>
        <taxon>Poaceae</taxon>
        <taxon>PACMAD clade</taxon>
        <taxon>Panicoideae</taxon>
        <taxon>Andropogonodae</taxon>
        <taxon>Andropogoneae</taxon>
        <taxon>Tripsacinae</taxon>
        <taxon>Zea</taxon>
    </lineage>
</organism>
<keyword id="KW-0903">Direct protein sequencing</keyword>
<keyword id="KW-1185">Reference proteome</keyword>
<name>UC19_MAIZE</name>
<reference key="1">
    <citation type="journal article" date="1996" name="Theor. Appl. Genet.">
        <title>The maize two dimensional gel protein database: towards an integrated genome analysis program.</title>
        <authorList>
            <person name="Touzet P."/>
            <person name="Riccardi F."/>
            <person name="Morin C."/>
            <person name="Damerval C."/>
            <person name="Huet J.-C."/>
            <person name="Pernollet J.-C."/>
            <person name="Zivy M."/>
            <person name="de Vienne D."/>
        </authorList>
        <dbReference type="AGRICOLA" id="IND20551642"/>
    </citation>
    <scope>PROTEIN SEQUENCE</scope>
    <source>
        <tissue>Coleoptile</tissue>
    </source>
</reference>